<reference key="1">
    <citation type="journal article" date="1991" name="Plant Cell">
        <title>The tobacco luminal binding protein is encoded by a multigene family.</title>
        <authorList>
            <person name="Denecke J."/>
            <person name="Goldman M.H."/>
            <person name="Demolder J."/>
            <person name="Seurinck J."/>
            <person name="Botterman J."/>
        </authorList>
    </citation>
    <scope>NUCLEOTIDE SEQUENCE [MRNA]</scope>
</reference>
<reference key="2">
    <citation type="journal article" date="1991" name="Plant Cell">
        <authorList>
            <person name="Denecke J."/>
            <person name="Goldman M.H."/>
            <person name="Demolder J."/>
            <person name="Seurinck J."/>
            <person name="Botterman J."/>
        </authorList>
    </citation>
    <scope>ERRATUM OF PUBMED:1822990</scope>
</reference>
<comment type="function">
    <text>Probably plays a role in facilitating the assembly of multimeric protein complexes inside the ER.</text>
</comment>
<comment type="subcellular location">
    <subcellularLocation>
        <location>Endoplasmic reticulum lumen</location>
    </subcellularLocation>
</comment>
<comment type="similarity">
    <text evidence="4">Belongs to the heat shock protein 70 family.</text>
</comment>
<protein>
    <recommendedName>
        <fullName>Luminal-binding protein 5</fullName>
        <shortName>BiP 5</shortName>
    </recommendedName>
    <alternativeName>
        <fullName>78 kDa glucose-regulated protein homolog 5</fullName>
        <shortName>GRP-78-5</shortName>
    </alternativeName>
</protein>
<name>BIP5_TOBAC</name>
<proteinExistence type="evidence at transcript level"/>
<evidence type="ECO:0000255" key="1"/>
<evidence type="ECO:0000255" key="2">
    <source>
        <dbReference type="PROSITE-ProRule" id="PRU10138"/>
    </source>
</evidence>
<evidence type="ECO:0000256" key="3">
    <source>
        <dbReference type="SAM" id="MobiDB-lite"/>
    </source>
</evidence>
<evidence type="ECO:0000305" key="4"/>
<sequence>MAGAWKRRASLIVFAIVLFGSLFAFSIAKEEATKLGTVIGIDLGTTYSCVGVYKNGHVEIIANDQGNRITPSWVAFTDGERLIGEAAKNQAAVNPERTIFDVKRLIGRKFDDKEVQRDKKLVPYEIVNKDGKPYIQVKIKDGETKVFSPEEISAMILTKMKETAEAYLGKKIKDAVVTVPAYFNDAQRQATKDAGVIAGLNVARIINEPTAAAIAYGLDKKGGEKNILVFDLGGGTFDVSILTIDNGVFEVLATNGDTHLGGEDFDQRIMEYFIKLIKKKHGKDISKDNRALGKLRREAERAKRALSSQHQVRVEIESLFDGVDFSEPLTRARFEELNNDLFRKTMGPVKKAMEDAGLEKNQIDEIVLVGGSTRIPKVQQLLKDYFDGKEPNKGVNPDEAVAYGAAVQGGILSGEGGDETKDILLLDVAPLTLGIETVGGVMTKLIPRNTVIPTKKSQVFTTYQDQQTTVTISVFEGERSLTKDCRLLGKFDLTGIAPAPRGTPQIEVTFEVDANGILNVKAEDKASGKSEKITITNDKGRLSQEEIERMVKEAEEFAEEDKKVKERIDARNSLETYVYNMRNQINDKDKLADKLESDEKEKIETATKEALEWLDDNQSAEKEDYDEKLKEVEAVCNPIITAVYQRSGGAPGGASEESNEDDDSHDEL</sequence>
<keyword id="KW-0067">ATP-binding</keyword>
<keyword id="KW-0256">Endoplasmic reticulum</keyword>
<keyword id="KW-0325">Glycoprotein</keyword>
<keyword id="KW-0547">Nucleotide-binding</keyword>
<keyword id="KW-1185">Reference proteome</keyword>
<keyword id="KW-0732">Signal</keyword>
<accession>Q03685</accession>
<feature type="signal peptide" evidence="1">
    <location>
        <begin position="1"/>
        <end position="24"/>
    </location>
</feature>
<feature type="chain" id="PRO_0000013595" description="Luminal-binding protein 5">
    <location>
        <begin position="25"/>
        <end position="668"/>
    </location>
</feature>
<feature type="region of interest" description="Disordered" evidence="3">
    <location>
        <begin position="645"/>
        <end position="668"/>
    </location>
</feature>
<feature type="short sequence motif" description="Prevents secretion from ER" evidence="2">
    <location>
        <begin position="665"/>
        <end position="668"/>
    </location>
</feature>
<feature type="compositionally biased region" description="Acidic residues" evidence="3">
    <location>
        <begin position="657"/>
        <end position="668"/>
    </location>
</feature>
<feature type="glycosylation site" description="N-linked (GlcNAc...) asparagine" evidence="1">
    <location>
        <position position="617"/>
    </location>
</feature>
<dbReference type="EMBL" id="X60058">
    <property type="protein sequence ID" value="CAA42660.1"/>
    <property type="molecule type" value="mRNA"/>
</dbReference>
<dbReference type="PIR" id="S21880">
    <property type="entry name" value="S21880"/>
</dbReference>
<dbReference type="RefSeq" id="NP_001312029.1">
    <property type="nucleotide sequence ID" value="NM_001325100.1"/>
</dbReference>
<dbReference type="RefSeq" id="XP_016446271.1">
    <property type="nucleotide sequence ID" value="XM_016590785.1"/>
</dbReference>
<dbReference type="SMR" id="Q03685"/>
<dbReference type="STRING" id="4097.Q03685"/>
<dbReference type="GlyCosmos" id="Q03685">
    <property type="glycosylation" value="1 site, No reported glycans"/>
</dbReference>
<dbReference type="PaxDb" id="4097-Q03685"/>
<dbReference type="GeneID" id="107771425"/>
<dbReference type="KEGG" id="nta:107771425"/>
<dbReference type="OMA" id="DSKPCIE"/>
<dbReference type="OrthoDB" id="2401965at2759"/>
<dbReference type="Proteomes" id="UP000084051">
    <property type="component" value="Unplaced"/>
</dbReference>
<dbReference type="GO" id="GO:0005737">
    <property type="term" value="C:cytoplasm"/>
    <property type="evidence" value="ECO:0000318"/>
    <property type="project" value="GO_Central"/>
</dbReference>
<dbReference type="GO" id="GO:0034663">
    <property type="term" value="C:endoplasmic reticulum chaperone complex"/>
    <property type="evidence" value="ECO:0000318"/>
    <property type="project" value="GO_Central"/>
</dbReference>
<dbReference type="GO" id="GO:0005788">
    <property type="term" value="C:endoplasmic reticulum lumen"/>
    <property type="evidence" value="ECO:0000318"/>
    <property type="project" value="GO_Central"/>
</dbReference>
<dbReference type="GO" id="GO:0016020">
    <property type="term" value="C:membrane"/>
    <property type="evidence" value="ECO:0000318"/>
    <property type="project" value="GO_Central"/>
</dbReference>
<dbReference type="GO" id="GO:0005634">
    <property type="term" value="C:nucleus"/>
    <property type="evidence" value="ECO:0000318"/>
    <property type="project" value="GO_Central"/>
</dbReference>
<dbReference type="GO" id="GO:0005524">
    <property type="term" value="F:ATP binding"/>
    <property type="evidence" value="ECO:0007669"/>
    <property type="project" value="UniProtKB-KW"/>
</dbReference>
<dbReference type="GO" id="GO:0016887">
    <property type="term" value="F:ATP hydrolysis activity"/>
    <property type="evidence" value="ECO:0000318"/>
    <property type="project" value="GO_Central"/>
</dbReference>
<dbReference type="GO" id="GO:0140662">
    <property type="term" value="F:ATP-dependent protein folding chaperone"/>
    <property type="evidence" value="ECO:0007669"/>
    <property type="project" value="InterPro"/>
</dbReference>
<dbReference type="GO" id="GO:0031072">
    <property type="term" value="F:heat shock protein binding"/>
    <property type="evidence" value="ECO:0000318"/>
    <property type="project" value="GO_Central"/>
</dbReference>
<dbReference type="GO" id="GO:0044183">
    <property type="term" value="F:protein folding chaperone"/>
    <property type="evidence" value="ECO:0000318"/>
    <property type="project" value="GO_Central"/>
</dbReference>
<dbReference type="GO" id="GO:0051085">
    <property type="term" value="P:chaperone cofactor-dependent protein refolding"/>
    <property type="evidence" value="ECO:0000318"/>
    <property type="project" value="GO_Central"/>
</dbReference>
<dbReference type="GO" id="GO:0030968">
    <property type="term" value="P:endoplasmic reticulum unfolded protein response"/>
    <property type="evidence" value="ECO:0000318"/>
    <property type="project" value="GO_Central"/>
</dbReference>
<dbReference type="GO" id="GO:0036503">
    <property type="term" value="P:ERAD pathway"/>
    <property type="evidence" value="ECO:0000318"/>
    <property type="project" value="GO_Central"/>
</dbReference>
<dbReference type="GO" id="GO:0042026">
    <property type="term" value="P:protein refolding"/>
    <property type="evidence" value="ECO:0000318"/>
    <property type="project" value="GO_Central"/>
</dbReference>
<dbReference type="CDD" id="cd10241">
    <property type="entry name" value="ASKHA_NBD_HSP70_BiP"/>
    <property type="match status" value="1"/>
</dbReference>
<dbReference type="FunFam" id="3.30.420.40:FF:000020">
    <property type="entry name" value="Chaperone protein HscA homolog"/>
    <property type="match status" value="1"/>
</dbReference>
<dbReference type="FunFam" id="3.90.640.10:FF:000153">
    <property type="entry name" value="Endoplasmic reticulum chaperone BiP"/>
    <property type="match status" value="1"/>
</dbReference>
<dbReference type="FunFam" id="2.60.34.10:FF:000002">
    <property type="entry name" value="Heat shock 70 kDa"/>
    <property type="match status" value="1"/>
</dbReference>
<dbReference type="FunFam" id="3.30.420.40:FF:000172">
    <property type="entry name" value="Heat shock 70 kDa protein"/>
    <property type="match status" value="1"/>
</dbReference>
<dbReference type="FunFam" id="3.30.420.40:FF:000026">
    <property type="entry name" value="Heat shock protein 70"/>
    <property type="match status" value="1"/>
</dbReference>
<dbReference type="FunFam" id="1.20.1270.10:FF:000015">
    <property type="entry name" value="Luminal-binding protein 5"/>
    <property type="match status" value="1"/>
</dbReference>
<dbReference type="Gene3D" id="1.20.1270.10">
    <property type="match status" value="1"/>
</dbReference>
<dbReference type="Gene3D" id="3.30.420.40">
    <property type="match status" value="2"/>
</dbReference>
<dbReference type="Gene3D" id="3.90.640.10">
    <property type="entry name" value="Actin, Chain A, domain 4"/>
    <property type="match status" value="1"/>
</dbReference>
<dbReference type="Gene3D" id="2.60.34.10">
    <property type="entry name" value="Substrate Binding Domain Of DNAk, Chain A, domain 1"/>
    <property type="match status" value="1"/>
</dbReference>
<dbReference type="InterPro" id="IPR043129">
    <property type="entry name" value="ATPase_NBD"/>
</dbReference>
<dbReference type="InterPro" id="IPR042050">
    <property type="entry name" value="BIP_NBD"/>
</dbReference>
<dbReference type="InterPro" id="IPR018181">
    <property type="entry name" value="Heat_shock_70_CS"/>
</dbReference>
<dbReference type="InterPro" id="IPR029048">
    <property type="entry name" value="HSP70_C_sf"/>
</dbReference>
<dbReference type="InterPro" id="IPR029047">
    <property type="entry name" value="HSP70_peptide-bd_sf"/>
</dbReference>
<dbReference type="InterPro" id="IPR013126">
    <property type="entry name" value="Hsp_70_fam"/>
</dbReference>
<dbReference type="NCBIfam" id="NF001413">
    <property type="entry name" value="PRK00290.1"/>
    <property type="match status" value="1"/>
</dbReference>
<dbReference type="PANTHER" id="PTHR19375">
    <property type="entry name" value="HEAT SHOCK PROTEIN 70KDA"/>
    <property type="match status" value="1"/>
</dbReference>
<dbReference type="Pfam" id="PF00012">
    <property type="entry name" value="HSP70"/>
    <property type="match status" value="1"/>
</dbReference>
<dbReference type="PRINTS" id="PR00301">
    <property type="entry name" value="HEATSHOCK70"/>
</dbReference>
<dbReference type="SUPFAM" id="SSF53067">
    <property type="entry name" value="Actin-like ATPase domain"/>
    <property type="match status" value="2"/>
</dbReference>
<dbReference type="SUPFAM" id="SSF100934">
    <property type="entry name" value="Heat shock protein 70kD (HSP70), C-terminal subdomain"/>
    <property type="match status" value="1"/>
</dbReference>
<dbReference type="SUPFAM" id="SSF100920">
    <property type="entry name" value="Heat shock protein 70kD (HSP70), peptide-binding domain"/>
    <property type="match status" value="1"/>
</dbReference>
<dbReference type="PROSITE" id="PS00014">
    <property type="entry name" value="ER_TARGET"/>
    <property type="match status" value="1"/>
</dbReference>
<dbReference type="PROSITE" id="PS00297">
    <property type="entry name" value="HSP70_1"/>
    <property type="match status" value="1"/>
</dbReference>
<dbReference type="PROSITE" id="PS00329">
    <property type="entry name" value="HSP70_2"/>
    <property type="match status" value="1"/>
</dbReference>
<dbReference type="PROSITE" id="PS01036">
    <property type="entry name" value="HSP70_3"/>
    <property type="match status" value="1"/>
</dbReference>
<gene>
    <name type="primary">BIP5</name>
</gene>
<organism>
    <name type="scientific">Nicotiana tabacum</name>
    <name type="common">Common tobacco</name>
    <dbReference type="NCBI Taxonomy" id="4097"/>
    <lineage>
        <taxon>Eukaryota</taxon>
        <taxon>Viridiplantae</taxon>
        <taxon>Streptophyta</taxon>
        <taxon>Embryophyta</taxon>
        <taxon>Tracheophyta</taxon>
        <taxon>Spermatophyta</taxon>
        <taxon>Magnoliopsida</taxon>
        <taxon>eudicotyledons</taxon>
        <taxon>Gunneridae</taxon>
        <taxon>Pentapetalae</taxon>
        <taxon>asterids</taxon>
        <taxon>lamiids</taxon>
        <taxon>Solanales</taxon>
        <taxon>Solanaceae</taxon>
        <taxon>Nicotianoideae</taxon>
        <taxon>Nicotianeae</taxon>
        <taxon>Nicotiana</taxon>
    </lineage>
</organism>